<organism>
    <name type="scientific">Schizosaccharomyces pombe (strain 972 / ATCC 24843)</name>
    <name type="common">Fission yeast</name>
    <dbReference type="NCBI Taxonomy" id="284812"/>
    <lineage>
        <taxon>Eukaryota</taxon>
        <taxon>Fungi</taxon>
        <taxon>Dikarya</taxon>
        <taxon>Ascomycota</taxon>
        <taxon>Taphrinomycotina</taxon>
        <taxon>Schizosaccharomycetes</taxon>
        <taxon>Schizosaccharomycetales</taxon>
        <taxon>Schizosaccharomycetaceae</taxon>
        <taxon>Schizosaccharomyces</taxon>
    </lineage>
</organism>
<protein>
    <recommendedName>
        <fullName>Uncharacterized protein SPAC823.17</fullName>
    </recommendedName>
</protein>
<dbReference type="EMBL" id="CU329670">
    <property type="status" value="NOT_ANNOTATED_CDS"/>
    <property type="molecule type" value="Genomic_DNA"/>
</dbReference>
<dbReference type="SMR" id="P0CU22"/>
<dbReference type="STRING" id="284812.P0CU22"/>
<dbReference type="EnsemblFungi" id="SPAC823.17.1">
    <property type="protein sequence ID" value="SPAC823.17.1:pep"/>
    <property type="gene ID" value="SPAC823.17"/>
</dbReference>
<dbReference type="PomBase" id="SPAC823.17"/>
<dbReference type="VEuPathDB" id="FungiDB:SPAC823.17"/>
<dbReference type="InParanoid" id="P0CU22"/>
<dbReference type="PRO" id="PR:P0CU22"/>
<dbReference type="Proteomes" id="UP000002485">
    <property type="component" value="Chromosome I"/>
</dbReference>
<dbReference type="GO" id="GO:0005742">
    <property type="term" value="C:mitochondrial outer membrane translocase complex"/>
    <property type="evidence" value="ECO:0000266"/>
    <property type="project" value="PomBase"/>
</dbReference>
<dbReference type="GO" id="GO:0005739">
    <property type="term" value="C:mitochondrion"/>
    <property type="evidence" value="ECO:0007005"/>
    <property type="project" value="PomBase"/>
</dbReference>
<dbReference type="GO" id="GO:1990816">
    <property type="term" value="C:vacuole-mitochondrion membrane contact site"/>
    <property type="evidence" value="ECO:0000304"/>
    <property type="project" value="PomBase"/>
</dbReference>
<dbReference type="GO" id="GO:0030150">
    <property type="term" value="P:protein import into mitochondrial matrix"/>
    <property type="evidence" value="ECO:0000266"/>
    <property type="project" value="PomBase"/>
</dbReference>
<dbReference type="GO" id="GO:0140057">
    <property type="term" value="P:vacuole-mitochondria membrane tethering"/>
    <property type="evidence" value="ECO:0000304"/>
    <property type="project" value="PomBase"/>
</dbReference>
<reference key="1">
    <citation type="journal article" date="2002" name="Nature">
        <title>The genome sequence of Schizosaccharomyces pombe.</title>
        <authorList>
            <person name="Wood V."/>
            <person name="Gwilliam R."/>
            <person name="Rajandream M.A."/>
            <person name="Lyne M.H."/>
            <person name="Lyne R."/>
            <person name="Stewart A."/>
            <person name="Sgouros J.G."/>
            <person name="Peat N."/>
            <person name="Hayles J."/>
            <person name="Baker S.G."/>
            <person name="Basham D."/>
            <person name="Bowman S."/>
            <person name="Brooks K."/>
            <person name="Brown D."/>
            <person name="Brown S."/>
            <person name="Chillingworth T."/>
            <person name="Churcher C.M."/>
            <person name="Collins M."/>
            <person name="Connor R."/>
            <person name="Cronin A."/>
            <person name="Davis P."/>
            <person name="Feltwell T."/>
            <person name="Fraser A."/>
            <person name="Gentles S."/>
            <person name="Goble A."/>
            <person name="Hamlin N."/>
            <person name="Harris D.E."/>
            <person name="Hidalgo J."/>
            <person name="Hodgson G."/>
            <person name="Holroyd S."/>
            <person name="Hornsby T."/>
            <person name="Howarth S."/>
            <person name="Huckle E.J."/>
            <person name="Hunt S."/>
            <person name="Jagels K."/>
            <person name="James K.D."/>
            <person name="Jones L."/>
            <person name="Jones M."/>
            <person name="Leather S."/>
            <person name="McDonald S."/>
            <person name="McLean J."/>
            <person name="Mooney P."/>
            <person name="Moule S."/>
            <person name="Mungall K.L."/>
            <person name="Murphy L.D."/>
            <person name="Niblett D."/>
            <person name="Odell C."/>
            <person name="Oliver K."/>
            <person name="O'Neil S."/>
            <person name="Pearson D."/>
            <person name="Quail M.A."/>
            <person name="Rabbinowitsch E."/>
            <person name="Rutherford K.M."/>
            <person name="Rutter S."/>
            <person name="Saunders D."/>
            <person name="Seeger K."/>
            <person name="Sharp S."/>
            <person name="Skelton J."/>
            <person name="Simmonds M.N."/>
            <person name="Squares R."/>
            <person name="Squares S."/>
            <person name="Stevens K."/>
            <person name="Taylor K."/>
            <person name="Taylor R.G."/>
            <person name="Tivey A."/>
            <person name="Walsh S.V."/>
            <person name="Warren T."/>
            <person name="Whitehead S."/>
            <person name="Woodward J.R."/>
            <person name="Volckaert G."/>
            <person name="Aert R."/>
            <person name="Robben J."/>
            <person name="Grymonprez B."/>
            <person name="Weltjens I."/>
            <person name="Vanstreels E."/>
            <person name="Rieger M."/>
            <person name="Schaefer M."/>
            <person name="Mueller-Auer S."/>
            <person name="Gabel C."/>
            <person name="Fuchs M."/>
            <person name="Duesterhoeft A."/>
            <person name="Fritzc C."/>
            <person name="Holzer E."/>
            <person name="Moestl D."/>
            <person name="Hilbert H."/>
            <person name="Borzym K."/>
            <person name="Langer I."/>
            <person name="Beck A."/>
            <person name="Lehrach H."/>
            <person name="Reinhardt R."/>
            <person name="Pohl T.M."/>
            <person name="Eger P."/>
            <person name="Zimmermann W."/>
            <person name="Wedler H."/>
            <person name="Wambutt R."/>
            <person name="Purnelle B."/>
            <person name="Goffeau A."/>
            <person name="Cadieu E."/>
            <person name="Dreano S."/>
            <person name="Gloux S."/>
            <person name="Lelaure V."/>
            <person name="Mottier S."/>
            <person name="Galibert F."/>
            <person name="Aves S.J."/>
            <person name="Xiang Z."/>
            <person name="Hunt C."/>
            <person name="Moore K."/>
            <person name="Hurst S.M."/>
            <person name="Lucas M."/>
            <person name="Rochet M."/>
            <person name="Gaillardin C."/>
            <person name="Tallada V.A."/>
            <person name="Garzon A."/>
            <person name="Thode G."/>
            <person name="Daga R.R."/>
            <person name="Cruzado L."/>
            <person name="Jimenez J."/>
            <person name="Sanchez M."/>
            <person name="del Rey F."/>
            <person name="Benito J."/>
            <person name="Dominguez A."/>
            <person name="Revuelta J.L."/>
            <person name="Moreno S."/>
            <person name="Armstrong J."/>
            <person name="Forsburg S.L."/>
            <person name="Cerutti L."/>
            <person name="Lowe T."/>
            <person name="McCombie W.R."/>
            <person name="Paulsen I."/>
            <person name="Potashkin J."/>
            <person name="Shpakovski G.V."/>
            <person name="Ussery D."/>
            <person name="Barrell B.G."/>
            <person name="Nurse P."/>
        </authorList>
    </citation>
    <scope>NUCLEOTIDE SEQUENCE [LARGE SCALE GENOMIC DNA]</scope>
    <source>
        <strain>972 / ATCC 24843</strain>
    </source>
</reference>
<reference key="2">
    <citation type="journal article" date="2014" name="Nat. Struct. Mol. Biol.">
        <title>The translational landscape of fission-yeast meiosis and sporulation.</title>
        <authorList>
            <person name="Duncan C.D."/>
            <person name="Mata J."/>
        </authorList>
    </citation>
    <scope>IDENTIFICATION</scope>
</reference>
<name>YKBH_SCHPO</name>
<evidence type="ECO:0000255" key="1"/>
<gene>
    <name type="ORF">SPAC823.17</name>
</gene>
<keyword id="KW-0472">Membrane</keyword>
<keyword id="KW-1185">Reference proteome</keyword>
<keyword id="KW-0812">Transmembrane</keyword>
<keyword id="KW-1133">Transmembrane helix</keyword>
<proteinExistence type="inferred from homology"/>
<accession>P0CU22</accession>
<comment type="subcellular location">
    <subcellularLocation>
        <location evidence="1">Membrane</location>
        <topology evidence="1">Single-pass membrane protein</topology>
    </subcellularLocation>
</comment>
<feature type="chain" id="PRO_0000437262" description="Uncharacterized protein SPAC823.17">
    <location>
        <begin position="1"/>
        <end position="48"/>
    </location>
</feature>
<feature type="transmembrane region" description="Helical" evidence="1">
    <location>
        <begin position="21"/>
        <end position="43"/>
    </location>
</feature>
<sequence>MDRISAQKDIFKKVVNKENSSIFVSLGVFAVSVAILKSRLGNFLVPQL</sequence>